<dbReference type="EMBL" id="CR380956">
    <property type="protein sequence ID" value="CAG60685.1"/>
    <property type="molecule type" value="Genomic_DNA"/>
</dbReference>
<dbReference type="RefSeq" id="XP_447738.1">
    <property type="nucleotide sequence ID" value="XM_447738.1"/>
</dbReference>
<dbReference type="SMR" id="Q6FPV6"/>
<dbReference type="FunCoup" id="Q6FPV6">
    <property type="interactions" value="1672"/>
</dbReference>
<dbReference type="STRING" id="284593.Q6FPV6"/>
<dbReference type="EnsemblFungi" id="CAGL0J00605g-T">
    <property type="protein sequence ID" value="CAGL0J00605g-T-p1"/>
    <property type="gene ID" value="CAGL0J00605g"/>
</dbReference>
<dbReference type="KEGG" id="cgr:2889882"/>
<dbReference type="CGD" id="CAL0133686">
    <property type="gene designation" value="CAGL0J00605g"/>
</dbReference>
<dbReference type="VEuPathDB" id="FungiDB:B1J91_J00605g"/>
<dbReference type="VEuPathDB" id="FungiDB:CAGL0J00605g"/>
<dbReference type="eggNOG" id="KOG2005">
    <property type="taxonomic scope" value="Eukaryota"/>
</dbReference>
<dbReference type="HOGENOM" id="CLU_008705_1_0_1"/>
<dbReference type="InParanoid" id="Q6FPV6"/>
<dbReference type="OMA" id="GTCNGDI"/>
<dbReference type="Proteomes" id="UP000002428">
    <property type="component" value="Chromosome J"/>
</dbReference>
<dbReference type="GO" id="GO:1905754">
    <property type="term" value="C:ascospore-type prospore nucleus"/>
    <property type="evidence" value="ECO:0007669"/>
    <property type="project" value="EnsemblFungi"/>
</dbReference>
<dbReference type="GO" id="GO:0034399">
    <property type="term" value="C:nuclear periphery"/>
    <property type="evidence" value="ECO:0007669"/>
    <property type="project" value="EnsemblFungi"/>
</dbReference>
<dbReference type="GO" id="GO:0008540">
    <property type="term" value="C:proteasome regulatory particle, base subcomplex"/>
    <property type="evidence" value="ECO:0007669"/>
    <property type="project" value="EnsemblFungi"/>
</dbReference>
<dbReference type="GO" id="GO:0034515">
    <property type="term" value="C:proteasome storage granule"/>
    <property type="evidence" value="ECO:0007669"/>
    <property type="project" value="EnsemblFungi"/>
</dbReference>
<dbReference type="GO" id="GO:0030234">
    <property type="term" value="F:enzyme regulator activity"/>
    <property type="evidence" value="ECO:0007669"/>
    <property type="project" value="InterPro"/>
</dbReference>
<dbReference type="GO" id="GO:0030674">
    <property type="term" value="F:protein-macromolecule adaptor activity"/>
    <property type="evidence" value="ECO:0007669"/>
    <property type="project" value="EnsemblFungi"/>
</dbReference>
<dbReference type="GO" id="GO:0043161">
    <property type="term" value="P:proteasome-mediated ubiquitin-dependent protein catabolic process"/>
    <property type="evidence" value="ECO:0007669"/>
    <property type="project" value="EnsemblFungi"/>
</dbReference>
<dbReference type="GO" id="GO:0042176">
    <property type="term" value="P:regulation of protein catabolic process"/>
    <property type="evidence" value="ECO:0007669"/>
    <property type="project" value="InterPro"/>
</dbReference>
<dbReference type="Gene3D" id="1.25.10.10">
    <property type="entry name" value="Leucine-rich Repeat Variant"/>
    <property type="match status" value="1"/>
</dbReference>
<dbReference type="InterPro" id="IPR016643">
    <property type="entry name" value="26S_Psome_Rpn1"/>
</dbReference>
<dbReference type="InterPro" id="IPR011989">
    <property type="entry name" value="ARM-like"/>
</dbReference>
<dbReference type="InterPro" id="IPR016024">
    <property type="entry name" value="ARM-type_fold"/>
</dbReference>
<dbReference type="InterPro" id="IPR002015">
    <property type="entry name" value="Proteasome/cyclosome_rpt"/>
</dbReference>
<dbReference type="InterPro" id="IPR041433">
    <property type="entry name" value="RPN1_C"/>
</dbReference>
<dbReference type="InterPro" id="IPR040892">
    <property type="entry name" value="RPN1_N"/>
</dbReference>
<dbReference type="PANTHER" id="PTHR10943">
    <property type="entry name" value="26S PROTEASOME NON-ATPASE REGULATORY SUBUNIT"/>
    <property type="match status" value="1"/>
</dbReference>
<dbReference type="PANTHER" id="PTHR10943:SF1">
    <property type="entry name" value="26S PROTEASOME NON-ATPASE REGULATORY SUBUNIT 2"/>
    <property type="match status" value="1"/>
</dbReference>
<dbReference type="Pfam" id="PF01851">
    <property type="entry name" value="PC_rep"/>
    <property type="match status" value="2"/>
</dbReference>
<dbReference type="Pfam" id="PF18051">
    <property type="entry name" value="RPN1_C"/>
    <property type="match status" value="1"/>
</dbReference>
<dbReference type="Pfam" id="PF17781">
    <property type="entry name" value="RPN1_RPN2_N"/>
    <property type="match status" value="1"/>
</dbReference>
<dbReference type="PIRSF" id="PIRSF015965">
    <property type="entry name" value="26S_Psome_Rpn1"/>
    <property type="match status" value="1"/>
</dbReference>
<dbReference type="SUPFAM" id="SSF48371">
    <property type="entry name" value="ARM repeat"/>
    <property type="match status" value="1"/>
</dbReference>
<protein>
    <recommendedName>
        <fullName>26S proteasome regulatory subunit RPN1</fullName>
    </recommendedName>
</protein>
<accession>Q6FPV6</accession>
<feature type="chain" id="PRO_0000173812" description="26S proteasome regulatory subunit RPN1">
    <location>
        <begin position="1"/>
        <end position="983"/>
    </location>
</feature>
<feature type="repeat" description="PC 1">
    <location>
        <begin position="415"/>
        <end position="447"/>
    </location>
</feature>
<feature type="repeat" description="PC 2">
    <location>
        <begin position="448"/>
        <end position="484"/>
    </location>
</feature>
<feature type="repeat" description="PC 3">
    <location>
        <begin position="485"/>
        <end position="519"/>
    </location>
</feature>
<feature type="repeat" description="PC 4">
    <location>
        <begin position="520"/>
        <end position="557"/>
    </location>
</feature>
<feature type="repeat" description="PC 5">
    <location>
        <begin position="563"/>
        <end position="595"/>
    </location>
</feature>
<feature type="repeat" description="PC 6">
    <location>
        <begin position="768"/>
        <end position="799"/>
    </location>
</feature>
<feature type="repeat" description="PC 7">
    <location>
        <begin position="800"/>
        <end position="834"/>
    </location>
</feature>
<feature type="region of interest" description="Disordered" evidence="2">
    <location>
        <begin position="1"/>
        <end position="44"/>
    </location>
</feature>
<feature type="region of interest" description="Disordered" evidence="2">
    <location>
        <begin position="169"/>
        <end position="188"/>
    </location>
</feature>
<feature type="region of interest" description="Disordered" evidence="2">
    <location>
        <begin position="625"/>
        <end position="644"/>
    </location>
</feature>
<feature type="region of interest" description="Disordered" evidence="2">
    <location>
        <begin position="662"/>
        <end position="724"/>
    </location>
</feature>
<feature type="compositionally biased region" description="Basic and acidic residues" evidence="2">
    <location>
        <begin position="1"/>
        <end position="26"/>
    </location>
</feature>
<feature type="compositionally biased region" description="Acidic residues" evidence="2">
    <location>
        <begin position="630"/>
        <end position="642"/>
    </location>
</feature>
<feature type="compositionally biased region" description="Basic and acidic residues" evidence="2">
    <location>
        <begin position="688"/>
        <end position="705"/>
    </location>
</feature>
<feature type="compositionally biased region" description="Acidic residues" evidence="2">
    <location>
        <begin position="706"/>
        <end position="718"/>
    </location>
</feature>
<proteinExistence type="inferred from homology"/>
<evidence type="ECO:0000250" key="1"/>
<evidence type="ECO:0000256" key="2">
    <source>
        <dbReference type="SAM" id="MobiDB-lite"/>
    </source>
</evidence>
<evidence type="ECO:0000305" key="3"/>
<name>RPN1_CANGA</name>
<sequence length="983" mass="109675">MSTDKKKEEVPKPETEDLTVKDETKNKDKKKANEEEELSEEDQKLKGDLEMLVQTLLEDDSKLYETTLTQLKEFIKNSTSSMTAVPKPLKFLRPFYPDLCKAYDKWSDKDQKSSLADMLSVLAMTYSDTHQHDSLRFRLLSDTSNIASWGHEYVRHLALEIGEVYNEQVEKEAEDNSTSTESSPQPPHMNFEFSKDVILQLSLEIVPYFMKHNGEEDAVDLLLEIEAIEKLPQFVDENTYKRVCQYMIACVQLLPPPEDISFLQTAYSIYLSELQLPEALSLAIRLGNEDMIRSVFDATSDPIVHQQLAYILAAQRVPFEHPELQEIIGNTKLSEHFLYLAKELNLLTPKIPEDIYKSHLDSSKSVFSSAGLDSAQQNLAASFVNAFLNLGYCNDKMITDNDNWVYKTKGDGMTSAVASIGSIYQWNIDGLQQLDKYLYVDEPEVKAGGLLGIGIASAGVHHDVEPALLLLQEYINHSDTKISTAAILGIGIAFAGSKNDEVLGLLLPVVSNTENSLELAAIAALALSHVFVGTCNGDITTAVMDNFLERTPLELKSEWARFLALSLGLLYLGQGEHVDDVLETINAIEHPMTSAIEVLISSCAYTATGDVLLVQDLLHRLTPKAVKSSDEDEDEDNEELSQEDMNGISAFLGKKENEIAEEPQGNEGADNEMEVDSHQDETTTGENNVKKEENEEEKTEKSEKTENDEEEEDEEESKDEGANDELAYAVIGIALITMGEEIGKEMSLRHFGHLMHYGNEHIRRMVPLAMGLVSVADPQMKVFDTLTRFSHDPDLDVSMNSIFAMGLCGVGTNNARLAQLLRQLASYYSREQDALFITRLAQGLVHLGKGTMTMDIFNDAHVLNKVTLASLLTVLVGLISPSFILKHHQLFYMLNSGVRPKFIITLNEEGEQIKVNVRIGQAVETVGQAGKPKTITGWITQSTPVLLGHGERAELENDEYISYTNNIEGVVILKKNPNFQEEE</sequence>
<keyword id="KW-0647">Proteasome</keyword>
<keyword id="KW-1185">Reference proteome</keyword>
<keyword id="KW-0677">Repeat</keyword>
<gene>
    <name type="primary">RPN1</name>
    <name type="ordered locus">CAGL0J00605g</name>
</gene>
<organism>
    <name type="scientific">Candida glabrata (strain ATCC 2001 / BCRC 20586 / JCM 3761 / NBRC 0622 / NRRL Y-65 / CBS 138)</name>
    <name type="common">Yeast</name>
    <name type="synonym">Nakaseomyces glabratus</name>
    <dbReference type="NCBI Taxonomy" id="284593"/>
    <lineage>
        <taxon>Eukaryota</taxon>
        <taxon>Fungi</taxon>
        <taxon>Dikarya</taxon>
        <taxon>Ascomycota</taxon>
        <taxon>Saccharomycotina</taxon>
        <taxon>Saccharomycetes</taxon>
        <taxon>Saccharomycetales</taxon>
        <taxon>Saccharomycetaceae</taxon>
        <taxon>Nakaseomyces</taxon>
    </lineage>
</organism>
<comment type="function">
    <text evidence="1">Acts as a regulatory subunit of the 26 proteasome which is involved in the ATP-dependent degradation of ubiquitinated proteins.</text>
</comment>
<comment type="similarity">
    <text evidence="3">Belongs to the proteasome subunit S2 family.</text>
</comment>
<reference key="1">
    <citation type="journal article" date="2004" name="Nature">
        <title>Genome evolution in yeasts.</title>
        <authorList>
            <person name="Dujon B."/>
            <person name="Sherman D."/>
            <person name="Fischer G."/>
            <person name="Durrens P."/>
            <person name="Casaregola S."/>
            <person name="Lafontaine I."/>
            <person name="de Montigny J."/>
            <person name="Marck C."/>
            <person name="Neuveglise C."/>
            <person name="Talla E."/>
            <person name="Goffard N."/>
            <person name="Frangeul L."/>
            <person name="Aigle M."/>
            <person name="Anthouard V."/>
            <person name="Babour A."/>
            <person name="Barbe V."/>
            <person name="Barnay S."/>
            <person name="Blanchin S."/>
            <person name="Beckerich J.-M."/>
            <person name="Beyne E."/>
            <person name="Bleykasten C."/>
            <person name="Boisrame A."/>
            <person name="Boyer J."/>
            <person name="Cattolico L."/>
            <person name="Confanioleri F."/>
            <person name="de Daruvar A."/>
            <person name="Despons L."/>
            <person name="Fabre E."/>
            <person name="Fairhead C."/>
            <person name="Ferry-Dumazet H."/>
            <person name="Groppi A."/>
            <person name="Hantraye F."/>
            <person name="Hennequin C."/>
            <person name="Jauniaux N."/>
            <person name="Joyet P."/>
            <person name="Kachouri R."/>
            <person name="Kerrest A."/>
            <person name="Koszul R."/>
            <person name="Lemaire M."/>
            <person name="Lesur I."/>
            <person name="Ma L."/>
            <person name="Muller H."/>
            <person name="Nicaud J.-M."/>
            <person name="Nikolski M."/>
            <person name="Oztas S."/>
            <person name="Ozier-Kalogeropoulos O."/>
            <person name="Pellenz S."/>
            <person name="Potier S."/>
            <person name="Richard G.-F."/>
            <person name="Straub M.-L."/>
            <person name="Suleau A."/>
            <person name="Swennen D."/>
            <person name="Tekaia F."/>
            <person name="Wesolowski-Louvel M."/>
            <person name="Westhof E."/>
            <person name="Wirth B."/>
            <person name="Zeniou-Meyer M."/>
            <person name="Zivanovic Y."/>
            <person name="Bolotin-Fukuhara M."/>
            <person name="Thierry A."/>
            <person name="Bouchier C."/>
            <person name="Caudron B."/>
            <person name="Scarpelli C."/>
            <person name="Gaillardin C."/>
            <person name="Weissenbach J."/>
            <person name="Wincker P."/>
            <person name="Souciet J.-L."/>
        </authorList>
    </citation>
    <scope>NUCLEOTIDE SEQUENCE [LARGE SCALE GENOMIC DNA]</scope>
    <source>
        <strain>ATCC 2001 / BCRC 20586 / JCM 3761 / NBRC 0622 / NRRL Y-65 / CBS 138</strain>
    </source>
</reference>